<keyword id="KW-0328">Glycosyltransferase</keyword>
<keyword id="KW-0808">Transferase</keyword>
<organism>
    <name type="scientific">Salmonella dublin (strain CT_02021853)</name>
    <dbReference type="NCBI Taxonomy" id="439851"/>
    <lineage>
        <taxon>Bacteria</taxon>
        <taxon>Pseudomonadati</taxon>
        <taxon>Pseudomonadota</taxon>
        <taxon>Gammaproteobacteria</taxon>
        <taxon>Enterobacterales</taxon>
        <taxon>Enterobacteriaceae</taxon>
        <taxon>Salmonella</taxon>
    </lineage>
</organism>
<gene>
    <name evidence="2" type="primary">deoD</name>
    <name type="ordered locus">SeD_A4985</name>
</gene>
<feature type="chain" id="PRO_1000186215" description="Purine nucleoside phosphorylase DeoD-type">
    <location>
        <begin position="1"/>
        <end position="239"/>
    </location>
</feature>
<feature type="active site" description="Proton donor" evidence="2">
    <location>
        <position position="205"/>
    </location>
</feature>
<feature type="binding site" evidence="1">
    <location>
        <position position="5"/>
    </location>
    <ligand>
        <name>a purine D-ribonucleoside</name>
        <dbReference type="ChEBI" id="CHEBI:142355"/>
        <note>ligand shared between dimeric partners</note>
    </ligand>
</feature>
<feature type="binding site" description="in other chain" evidence="1">
    <location>
        <position position="21"/>
    </location>
    <ligand>
        <name>phosphate</name>
        <dbReference type="ChEBI" id="CHEBI:43474"/>
        <note>ligand shared between dimeric partners</note>
    </ligand>
</feature>
<feature type="binding site" description="in other chain" evidence="1">
    <location>
        <position position="25"/>
    </location>
    <ligand>
        <name>phosphate</name>
        <dbReference type="ChEBI" id="CHEBI:43474"/>
        <note>ligand shared between dimeric partners</note>
    </ligand>
</feature>
<feature type="binding site" evidence="1">
    <location>
        <position position="44"/>
    </location>
    <ligand>
        <name>phosphate</name>
        <dbReference type="ChEBI" id="CHEBI:43474"/>
        <note>ligand shared between dimeric partners</note>
    </ligand>
</feature>
<feature type="binding site" description="in other chain" evidence="1">
    <location>
        <begin position="88"/>
        <end position="91"/>
    </location>
    <ligand>
        <name>phosphate</name>
        <dbReference type="ChEBI" id="CHEBI:43474"/>
        <note>ligand shared between dimeric partners</note>
    </ligand>
</feature>
<feature type="binding site" description="in other chain" evidence="1">
    <location>
        <begin position="180"/>
        <end position="182"/>
    </location>
    <ligand>
        <name>a purine D-ribonucleoside</name>
        <dbReference type="ChEBI" id="CHEBI:142355"/>
        <note>ligand shared between dimeric partners</note>
    </ligand>
</feature>
<feature type="binding site" description="in other chain" evidence="1">
    <location>
        <begin position="204"/>
        <end position="205"/>
    </location>
    <ligand>
        <name>a purine D-ribonucleoside</name>
        <dbReference type="ChEBI" id="CHEBI:142355"/>
        <note>ligand shared between dimeric partners</note>
    </ligand>
</feature>
<feature type="site" description="Important for catalytic activity" evidence="2">
    <location>
        <position position="218"/>
    </location>
</feature>
<evidence type="ECO:0000250" key="1">
    <source>
        <dbReference type="UniProtKB" id="P50389"/>
    </source>
</evidence>
<evidence type="ECO:0000255" key="2">
    <source>
        <dbReference type="HAMAP-Rule" id="MF_01627"/>
    </source>
</evidence>
<comment type="function">
    <text evidence="2">Catalyzes the reversible phosphorolytic breakdown of the N-glycosidic bond in the beta-(deoxy)ribonucleoside molecules, with the formation of the corresponding free purine bases and pentose-1-phosphate.</text>
</comment>
<comment type="catalytic activity">
    <reaction evidence="2">
        <text>a purine D-ribonucleoside + phosphate = a purine nucleobase + alpha-D-ribose 1-phosphate</text>
        <dbReference type="Rhea" id="RHEA:19805"/>
        <dbReference type="ChEBI" id="CHEBI:26386"/>
        <dbReference type="ChEBI" id="CHEBI:43474"/>
        <dbReference type="ChEBI" id="CHEBI:57720"/>
        <dbReference type="ChEBI" id="CHEBI:142355"/>
        <dbReference type="EC" id="2.4.2.1"/>
    </reaction>
</comment>
<comment type="catalytic activity">
    <reaction evidence="2">
        <text>a purine 2'-deoxy-D-ribonucleoside + phosphate = a purine nucleobase + 2-deoxy-alpha-D-ribose 1-phosphate</text>
        <dbReference type="Rhea" id="RHEA:36431"/>
        <dbReference type="ChEBI" id="CHEBI:26386"/>
        <dbReference type="ChEBI" id="CHEBI:43474"/>
        <dbReference type="ChEBI" id="CHEBI:57259"/>
        <dbReference type="ChEBI" id="CHEBI:142361"/>
        <dbReference type="EC" id="2.4.2.1"/>
    </reaction>
</comment>
<comment type="subunit">
    <text evidence="2">Homohexamer; trimer of homodimers.</text>
</comment>
<comment type="similarity">
    <text evidence="2">Belongs to the PNP/UDP phosphorylase family.</text>
</comment>
<dbReference type="EC" id="2.4.2.1" evidence="2"/>
<dbReference type="EMBL" id="CP001144">
    <property type="protein sequence ID" value="ACH77687.1"/>
    <property type="molecule type" value="Genomic_DNA"/>
</dbReference>
<dbReference type="RefSeq" id="WP_000224865.1">
    <property type="nucleotide sequence ID" value="NC_011205.1"/>
</dbReference>
<dbReference type="SMR" id="B5FTC8"/>
<dbReference type="KEGG" id="sed:SeD_A4985"/>
<dbReference type="HOGENOM" id="CLU_068457_2_0_6"/>
<dbReference type="Proteomes" id="UP000008322">
    <property type="component" value="Chromosome"/>
</dbReference>
<dbReference type="GO" id="GO:0005829">
    <property type="term" value="C:cytosol"/>
    <property type="evidence" value="ECO:0007669"/>
    <property type="project" value="TreeGrafter"/>
</dbReference>
<dbReference type="GO" id="GO:0004731">
    <property type="term" value="F:purine-nucleoside phosphorylase activity"/>
    <property type="evidence" value="ECO:0007669"/>
    <property type="project" value="UniProtKB-UniRule"/>
</dbReference>
<dbReference type="GO" id="GO:0006152">
    <property type="term" value="P:purine nucleoside catabolic process"/>
    <property type="evidence" value="ECO:0007669"/>
    <property type="project" value="TreeGrafter"/>
</dbReference>
<dbReference type="CDD" id="cd09006">
    <property type="entry name" value="PNP_EcPNPI-like"/>
    <property type="match status" value="1"/>
</dbReference>
<dbReference type="FunFam" id="3.40.50.1580:FF:000002">
    <property type="entry name" value="Purine nucleoside phosphorylase DeoD-type"/>
    <property type="match status" value="1"/>
</dbReference>
<dbReference type="Gene3D" id="3.40.50.1580">
    <property type="entry name" value="Nucleoside phosphorylase domain"/>
    <property type="match status" value="1"/>
</dbReference>
<dbReference type="HAMAP" id="MF_01627">
    <property type="entry name" value="Pur_nucleosid_phosp"/>
    <property type="match status" value="1"/>
</dbReference>
<dbReference type="InterPro" id="IPR004402">
    <property type="entry name" value="DeoD-type"/>
</dbReference>
<dbReference type="InterPro" id="IPR018016">
    <property type="entry name" value="Nucleoside_phosphorylase_CS"/>
</dbReference>
<dbReference type="InterPro" id="IPR000845">
    <property type="entry name" value="Nucleoside_phosphorylase_d"/>
</dbReference>
<dbReference type="InterPro" id="IPR035994">
    <property type="entry name" value="Nucleoside_phosphorylase_sf"/>
</dbReference>
<dbReference type="NCBIfam" id="TIGR00107">
    <property type="entry name" value="deoD"/>
    <property type="match status" value="1"/>
</dbReference>
<dbReference type="NCBIfam" id="NF004489">
    <property type="entry name" value="PRK05819.1"/>
    <property type="match status" value="1"/>
</dbReference>
<dbReference type="NCBIfam" id="NF009914">
    <property type="entry name" value="PRK13374.1"/>
    <property type="match status" value="1"/>
</dbReference>
<dbReference type="PANTHER" id="PTHR43691:SF2">
    <property type="entry name" value="PURINE NUCLEOSIDE PHOSPHORYLASE DEOD-TYPE"/>
    <property type="match status" value="1"/>
</dbReference>
<dbReference type="PANTHER" id="PTHR43691">
    <property type="entry name" value="URIDINE PHOSPHORYLASE"/>
    <property type="match status" value="1"/>
</dbReference>
<dbReference type="Pfam" id="PF01048">
    <property type="entry name" value="PNP_UDP_1"/>
    <property type="match status" value="1"/>
</dbReference>
<dbReference type="SUPFAM" id="SSF53167">
    <property type="entry name" value="Purine and uridine phosphorylases"/>
    <property type="match status" value="1"/>
</dbReference>
<dbReference type="PROSITE" id="PS01232">
    <property type="entry name" value="PNP_UDP_1"/>
    <property type="match status" value="1"/>
</dbReference>
<proteinExistence type="inferred from homology"/>
<accession>B5FTC8</accession>
<reference key="1">
    <citation type="journal article" date="2011" name="J. Bacteriol.">
        <title>Comparative genomics of 28 Salmonella enterica isolates: evidence for CRISPR-mediated adaptive sublineage evolution.</title>
        <authorList>
            <person name="Fricke W.F."/>
            <person name="Mammel M.K."/>
            <person name="McDermott P.F."/>
            <person name="Tartera C."/>
            <person name="White D.G."/>
            <person name="Leclerc J.E."/>
            <person name="Ravel J."/>
            <person name="Cebula T.A."/>
        </authorList>
    </citation>
    <scope>NUCLEOTIDE SEQUENCE [LARGE SCALE GENOMIC DNA]</scope>
    <source>
        <strain>CT_02021853</strain>
    </source>
</reference>
<name>DEOD_SALDC</name>
<protein>
    <recommendedName>
        <fullName evidence="2">Purine nucleoside phosphorylase DeoD-type</fullName>
        <shortName evidence="2">PNP</shortName>
        <ecNumber evidence="2">2.4.2.1</ecNumber>
    </recommendedName>
</protein>
<sequence>MATPHINAEMGDFADVVLMPGDPLRAKHIAETFLEDVREVNNVRGMLGFTGTYKGRKISVMGHGMGIPSCSIYTKELITDFGVKKIIRVGSCGAVRMDVKLRDVVIGMGACTDSKVNRIRFKDHDFAAIADFDMVRNAVDAAKALGVDARVGNLFSADLFYSPDGEMFDVMEKYGVLGVEMEAAGIYGVAAEFGAKALTICTVSDHIRTHEQTTAAERQTTFNDMIKIALESVLLGDQE</sequence>